<proteinExistence type="inferred from homology"/>
<reference key="1">
    <citation type="journal article" date="2001" name="Nature">
        <title>Genome sequence and gene compaction of the eukaryote parasite Encephalitozoon cuniculi.</title>
        <authorList>
            <person name="Katinka M.D."/>
            <person name="Duprat S."/>
            <person name="Cornillot E."/>
            <person name="Metenier G."/>
            <person name="Thomarat F."/>
            <person name="Prensier G."/>
            <person name="Barbe V."/>
            <person name="Peyretaillade E."/>
            <person name="Brottier P."/>
            <person name="Wincker P."/>
            <person name="Delbac F."/>
            <person name="El Alaoui H."/>
            <person name="Peyret P."/>
            <person name="Saurin W."/>
            <person name="Gouy M."/>
            <person name="Weissenbach J."/>
            <person name="Vivares C.P."/>
        </authorList>
    </citation>
    <scope>NUCLEOTIDE SEQUENCE [LARGE SCALE GENOMIC DNA]</scope>
    <source>
        <strain>GB-M1</strain>
    </source>
</reference>
<reference key="2">
    <citation type="journal article" date="2007" name="BMC Genomics">
        <title>The complement of protein kinases of the microsporidium Encephalitozoon cuniculi in relation to those of Saccharomyces cerevisiae and Schizosaccharomyces pombe.</title>
        <authorList>
            <person name="Miranda-Saavedra D."/>
            <person name="Stark M.J.R."/>
            <person name="Packer J.C."/>
            <person name="Vivares C.P."/>
            <person name="Doerig C."/>
            <person name="Barton G.J."/>
        </authorList>
    </citation>
    <scope>PREDICTION OF FUNCTION</scope>
</reference>
<comment type="function">
    <text evidence="1">Catalytic subunit of the CTDK-I complex, which hyperphosphorylates the C-terminal heptapeptide repeat domain (CTD) of the largest RNA polymerase II subunit. Involved in RNA polymerase II transcriptional elongation and pre-mRNA 3'-end processing (By similarity).</text>
</comment>
<comment type="catalytic activity">
    <reaction>
        <text>[DNA-directed RNA polymerase] + ATP = phospho-[DNA-directed RNA polymerase] + ADP + H(+)</text>
        <dbReference type="Rhea" id="RHEA:10216"/>
        <dbReference type="Rhea" id="RHEA-COMP:11321"/>
        <dbReference type="Rhea" id="RHEA-COMP:11322"/>
        <dbReference type="ChEBI" id="CHEBI:15378"/>
        <dbReference type="ChEBI" id="CHEBI:30616"/>
        <dbReference type="ChEBI" id="CHEBI:43176"/>
        <dbReference type="ChEBI" id="CHEBI:68546"/>
        <dbReference type="ChEBI" id="CHEBI:456216"/>
        <dbReference type="EC" id="2.7.11.23"/>
    </reaction>
</comment>
<comment type="subunit">
    <text evidence="1">Component of the CTDK-I complex.</text>
</comment>
<comment type="subcellular location">
    <subcellularLocation>
        <location evidence="1">Nucleus</location>
        <location evidence="1">Nucleolus</location>
    </subcellularLocation>
</comment>
<comment type="similarity">
    <text evidence="4">Belongs to the protein kinase superfamily. CMGC Ser/Thr protein kinase family. CDC2/CDKX subfamily.</text>
</comment>
<sequence>MEPAEEGEILAHRRFTATKMEYEKIRIIGEGTFGQVILARKGRARYALKKVSKEKEGLSVTTIREVQVLRAMGHPSIVRLIEVVVEPGGDIYMVFPYFPYDLNRFIRSNKMTCSEIKHIFYQIAQGVCYIHSKGIMHRDLKSANILLDQKLNASIADFGMARYTTKTGAYTPGMVTLWYRAPEILLGSSSYTYAVDIWSLGCILTEMYLGHMIFQGSTEMLQLEMVIHACGSINENSYPGVQDLPGFRNFRLPQSPRRIEGIIRKHDASAVELVSKMLCLDPSKRITVEQVVGSKYFEHEARRDASSAGLQGCSYREDRLSLSKRKNVD</sequence>
<organism>
    <name type="scientific">Encephalitozoon cuniculi (strain GB-M1)</name>
    <name type="common">Microsporidian parasite</name>
    <dbReference type="NCBI Taxonomy" id="284813"/>
    <lineage>
        <taxon>Eukaryota</taxon>
        <taxon>Fungi</taxon>
        <taxon>Fungi incertae sedis</taxon>
        <taxon>Microsporidia</taxon>
        <taxon>Unikaryonidae</taxon>
        <taxon>Encephalitozoon</taxon>
    </lineage>
</organism>
<name>CTK1_ENCCU</name>
<keyword id="KW-0067">ATP-binding</keyword>
<keyword id="KW-0418">Kinase</keyword>
<keyword id="KW-0507">mRNA processing</keyword>
<keyword id="KW-0547">Nucleotide-binding</keyword>
<keyword id="KW-0539">Nucleus</keyword>
<keyword id="KW-1185">Reference proteome</keyword>
<keyword id="KW-0723">Serine/threonine-protein kinase</keyword>
<keyword id="KW-0804">Transcription</keyword>
<keyword id="KW-0808">Transferase</keyword>
<gene>
    <name type="primary">CTK1</name>
    <name type="ordered locus">ECU11_0960</name>
</gene>
<accession>Q8SQW2</accession>
<evidence type="ECO:0000250" key="1"/>
<evidence type="ECO:0000255" key="2">
    <source>
        <dbReference type="PROSITE-ProRule" id="PRU00159"/>
    </source>
</evidence>
<evidence type="ECO:0000255" key="3">
    <source>
        <dbReference type="PROSITE-ProRule" id="PRU10027"/>
    </source>
</evidence>
<evidence type="ECO:0000305" key="4"/>
<protein>
    <recommendedName>
        <fullName>Probable CTD kinase subunit alpha homolog</fullName>
        <shortName>CTDK-I subunit alpha</shortName>
        <ecNumber>2.7.11.23</ecNumber>
    </recommendedName>
    <alternativeName>
        <fullName>CTD kinase subunit 1</fullName>
    </alternativeName>
</protein>
<feature type="chain" id="PRO_0000385504" description="Probable CTD kinase subunit alpha homolog">
    <location>
        <begin position="1"/>
        <end position="329"/>
    </location>
</feature>
<feature type="domain" description="Protein kinase" evidence="2">
    <location>
        <begin position="22"/>
        <end position="297"/>
    </location>
</feature>
<feature type="active site" description="Proton acceptor" evidence="2 3">
    <location>
        <position position="139"/>
    </location>
</feature>
<feature type="binding site" evidence="2">
    <location>
        <begin position="28"/>
        <end position="36"/>
    </location>
    <ligand>
        <name>ATP</name>
        <dbReference type="ChEBI" id="CHEBI:30616"/>
    </ligand>
</feature>
<feature type="binding site" evidence="2">
    <location>
        <position position="49"/>
    </location>
    <ligand>
        <name>ATP</name>
        <dbReference type="ChEBI" id="CHEBI:30616"/>
    </ligand>
</feature>
<dbReference type="EC" id="2.7.11.23"/>
<dbReference type="EMBL" id="AL590450">
    <property type="protein sequence ID" value="CAD26006.1"/>
    <property type="molecule type" value="Genomic_DNA"/>
</dbReference>
<dbReference type="RefSeq" id="NP_586402.1">
    <property type="nucleotide sequence ID" value="NM_001042235.1"/>
</dbReference>
<dbReference type="SMR" id="Q8SQW2"/>
<dbReference type="FunCoup" id="Q8SQW2">
    <property type="interactions" value="237"/>
</dbReference>
<dbReference type="STRING" id="284813.Q8SQW2"/>
<dbReference type="GeneID" id="860055"/>
<dbReference type="KEGG" id="ecu:ECU11_0960"/>
<dbReference type="VEuPathDB" id="MicrosporidiaDB:ECU11_0960"/>
<dbReference type="HOGENOM" id="CLU_000288_181_1_1"/>
<dbReference type="InParanoid" id="Q8SQW2"/>
<dbReference type="OMA" id="QVKYYME"/>
<dbReference type="OrthoDB" id="28397at2759"/>
<dbReference type="Proteomes" id="UP000000819">
    <property type="component" value="Chromosome XI"/>
</dbReference>
<dbReference type="GO" id="GO:0005730">
    <property type="term" value="C:nucleolus"/>
    <property type="evidence" value="ECO:0007669"/>
    <property type="project" value="UniProtKB-SubCell"/>
</dbReference>
<dbReference type="GO" id="GO:0005524">
    <property type="term" value="F:ATP binding"/>
    <property type="evidence" value="ECO:0007669"/>
    <property type="project" value="UniProtKB-KW"/>
</dbReference>
<dbReference type="GO" id="GO:0008353">
    <property type="term" value="F:RNA polymerase II CTD heptapeptide repeat kinase activity"/>
    <property type="evidence" value="ECO:0007669"/>
    <property type="project" value="UniProtKB-EC"/>
</dbReference>
<dbReference type="GO" id="GO:0006397">
    <property type="term" value="P:mRNA processing"/>
    <property type="evidence" value="ECO:0007669"/>
    <property type="project" value="UniProtKB-KW"/>
</dbReference>
<dbReference type="CDD" id="cd07840">
    <property type="entry name" value="STKc_CDK9_like"/>
    <property type="match status" value="1"/>
</dbReference>
<dbReference type="FunFam" id="1.10.510.10:FF:000624">
    <property type="entry name" value="Mitogen-activated protein kinase"/>
    <property type="match status" value="1"/>
</dbReference>
<dbReference type="Gene3D" id="3.30.200.20">
    <property type="entry name" value="Phosphorylase Kinase, domain 1"/>
    <property type="match status" value="1"/>
</dbReference>
<dbReference type="Gene3D" id="1.10.510.10">
    <property type="entry name" value="Transferase(Phosphotransferase) domain 1"/>
    <property type="match status" value="1"/>
</dbReference>
<dbReference type="InterPro" id="IPR050108">
    <property type="entry name" value="CDK"/>
</dbReference>
<dbReference type="InterPro" id="IPR011009">
    <property type="entry name" value="Kinase-like_dom_sf"/>
</dbReference>
<dbReference type="InterPro" id="IPR000719">
    <property type="entry name" value="Prot_kinase_dom"/>
</dbReference>
<dbReference type="InterPro" id="IPR017441">
    <property type="entry name" value="Protein_kinase_ATP_BS"/>
</dbReference>
<dbReference type="InterPro" id="IPR008271">
    <property type="entry name" value="Ser/Thr_kinase_AS"/>
</dbReference>
<dbReference type="PANTHER" id="PTHR24056">
    <property type="entry name" value="CELL DIVISION PROTEIN KINASE"/>
    <property type="match status" value="1"/>
</dbReference>
<dbReference type="Pfam" id="PF00069">
    <property type="entry name" value="Pkinase"/>
    <property type="match status" value="1"/>
</dbReference>
<dbReference type="SMART" id="SM00220">
    <property type="entry name" value="S_TKc"/>
    <property type="match status" value="1"/>
</dbReference>
<dbReference type="SUPFAM" id="SSF56112">
    <property type="entry name" value="Protein kinase-like (PK-like)"/>
    <property type="match status" value="1"/>
</dbReference>
<dbReference type="PROSITE" id="PS00107">
    <property type="entry name" value="PROTEIN_KINASE_ATP"/>
    <property type="match status" value="1"/>
</dbReference>
<dbReference type="PROSITE" id="PS50011">
    <property type="entry name" value="PROTEIN_KINASE_DOM"/>
    <property type="match status" value="1"/>
</dbReference>
<dbReference type="PROSITE" id="PS00108">
    <property type="entry name" value="PROTEIN_KINASE_ST"/>
    <property type="match status" value="1"/>
</dbReference>